<dbReference type="EMBL" id="CP000099">
    <property type="protein sequence ID" value="AAZ69738.1"/>
    <property type="molecule type" value="Genomic_DNA"/>
</dbReference>
<dbReference type="SMR" id="Q46EF4"/>
<dbReference type="STRING" id="269797.Mbar_A0761"/>
<dbReference type="PaxDb" id="269797-Mbar_A0761"/>
<dbReference type="KEGG" id="mba:Mbar_A0761"/>
<dbReference type="eggNOG" id="arCOG02701">
    <property type="taxonomic scope" value="Archaea"/>
</dbReference>
<dbReference type="HOGENOM" id="CLU_028523_2_1_2"/>
<dbReference type="OrthoDB" id="10691at2157"/>
<dbReference type="GO" id="GO:0016829">
    <property type="term" value="F:lyase activity"/>
    <property type="evidence" value="ECO:0007669"/>
    <property type="project" value="UniProtKB-UniRule"/>
</dbReference>
<dbReference type="GO" id="GO:0016151">
    <property type="term" value="F:nickel cation binding"/>
    <property type="evidence" value="ECO:0007669"/>
    <property type="project" value="UniProtKB-UniRule"/>
</dbReference>
<dbReference type="Gene3D" id="3.10.20.300">
    <property type="entry name" value="mk0293 like domain"/>
    <property type="match status" value="1"/>
</dbReference>
<dbReference type="Gene3D" id="3.30.70.1380">
    <property type="entry name" value="Transcriptional regulatory protein pf0864 domain like"/>
    <property type="match status" value="1"/>
</dbReference>
<dbReference type="HAMAP" id="MF_01074">
    <property type="entry name" value="LarC"/>
    <property type="match status" value="1"/>
</dbReference>
<dbReference type="InterPro" id="IPR002822">
    <property type="entry name" value="Ni_insertion"/>
</dbReference>
<dbReference type="NCBIfam" id="TIGR00299">
    <property type="entry name" value="nickel pincer cofactor biosynthesis protein LarC"/>
    <property type="match status" value="1"/>
</dbReference>
<dbReference type="PANTHER" id="PTHR36566">
    <property type="entry name" value="NICKEL INSERTION PROTEIN-RELATED"/>
    <property type="match status" value="1"/>
</dbReference>
<dbReference type="PANTHER" id="PTHR36566:SF1">
    <property type="entry name" value="PYRIDINIUM-3,5-BISTHIOCARBOXYLIC ACID MONONUCLEOTIDE NICKEL INSERTION PROTEIN"/>
    <property type="match status" value="1"/>
</dbReference>
<dbReference type="Pfam" id="PF01969">
    <property type="entry name" value="Ni_insertion"/>
    <property type="match status" value="1"/>
</dbReference>
<comment type="similarity">
    <text evidence="1">Belongs to the LarC family.</text>
</comment>
<gene>
    <name type="ordered locus">Mbar_A0761</name>
</gene>
<organism>
    <name type="scientific">Methanosarcina barkeri (strain Fusaro / DSM 804)</name>
    <dbReference type="NCBI Taxonomy" id="269797"/>
    <lineage>
        <taxon>Archaea</taxon>
        <taxon>Methanobacteriati</taxon>
        <taxon>Methanobacteriota</taxon>
        <taxon>Stenosarchaea group</taxon>
        <taxon>Methanomicrobia</taxon>
        <taxon>Methanosarcinales</taxon>
        <taxon>Methanosarcinaceae</taxon>
        <taxon>Methanosarcina</taxon>
    </lineage>
</organism>
<reference key="1">
    <citation type="journal article" date="2006" name="J. Bacteriol.">
        <title>The Methanosarcina barkeri genome: comparative analysis with Methanosarcina acetivorans and Methanosarcina mazei reveals extensive rearrangement within methanosarcinal genomes.</title>
        <authorList>
            <person name="Maeder D.L."/>
            <person name="Anderson I."/>
            <person name="Brettin T.S."/>
            <person name="Bruce D.C."/>
            <person name="Gilna P."/>
            <person name="Han C.S."/>
            <person name="Lapidus A."/>
            <person name="Metcalf W.W."/>
            <person name="Saunders E."/>
            <person name="Tapia R."/>
            <person name="Sowers K.R."/>
        </authorList>
    </citation>
    <scope>NUCLEOTIDE SEQUENCE [LARGE SCALE GENOMIC DNA]</scope>
    <source>
        <strain>Fusaro / DSM 804</strain>
    </source>
</reference>
<name>Y761_METBF</name>
<evidence type="ECO:0000255" key="1">
    <source>
        <dbReference type="HAMAP-Rule" id="MF_01074"/>
    </source>
</evidence>
<accession>Q46EF4</accession>
<feature type="chain" id="PRO_1000064650" description="Putative nickel insertion protein">
    <location>
        <begin position="1"/>
        <end position="396"/>
    </location>
</feature>
<proteinExistence type="inferred from homology"/>
<keyword id="KW-0533">Nickel</keyword>
<sequence length="396" mass="42358">MKALVFNPFSGAAGDMILGCTLDLGADRKTVKELIEASVNVSVDIREVVKKGIKALDVRINIPEKEQVRTYPELLDVVKAAKLPSSVEASALGIFSKLAEAEASVHGQPDLEKLHFHEVGQSDALADIIGSSAAIHSLNCDSVYCTPINVGSGTIECAHGVMPVPAPATLELLKKGKFYFRGGTEQKELLTPTGAAILAHFAGPLESFPQGRVISIGYGAGDSELSGPNVLQGTLCELDSCLIPDIIEVLETNADDVSGEVLGNLFEELLAMGARDVAILPATMKKGRPAHVIKVIAKPEDTAKLARKIIVETGSLGVRVIPTRHRLMAARRIESVNFEVEGQIYESAVKIARDSEGILLNMSAEFEDCKKIAKQSGIPVKEVMRKAEEAARKLFS</sequence>
<protein>
    <recommendedName>
        <fullName evidence="1">Putative nickel insertion protein</fullName>
    </recommendedName>
</protein>